<comment type="function">
    <text>Plays an important role in growth control. Its major role in stimulating body growth is to stimulate the liver and other tissues to secrete IGF1. It stimulates both the differentiation and proliferation of myoblasts. It also stimulates amino acid uptake and protein synthesis in muscle and other tissues.</text>
</comment>
<comment type="subcellular location">
    <subcellularLocation>
        <location>Secreted</location>
    </subcellularLocation>
</comment>
<comment type="similarity">
    <text evidence="3">Belongs to the somatotropin/prolactin family.</text>
</comment>
<feature type="signal peptide" evidence="1">
    <location>
        <begin position="1"/>
        <end position="27"/>
    </location>
</feature>
<feature type="chain" id="PRO_0000032994" description="Somatotropin">
    <location>
        <begin position="28"/>
        <end position="217"/>
    </location>
</feature>
<feature type="binding site" evidence="1">
    <location>
        <position position="46"/>
    </location>
    <ligand>
        <name>Zn(2+)</name>
        <dbReference type="ChEBI" id="CHEBI:29105"/>
    </ligand>
</feature>
<feature type="binding site" evidence="1">
    <location>
        <position position="199"/>
    </location>
    <ligand>
        <name>Zn(2+)</name>
        <dbReference type="ChEBI" id="CHEBI:29105"/>
    </ligand>
</feature>
<feature type="modified residue" description="Phosphoserine" evidence="2">
    <location>
        <position position="132"/>
    </location>
</feature>
<feature type="disulfide bond" evidence="1">
    <location>
        <begin position="79"/>
        <end position="190"/>
    </location>
</feature>
<feature type="disulfide bond" evidence="1">
    <location>
        <begin position="207"/>
        <end position="215"/>
    </location>
</feature>
<sequence length="217" mass="24395">MATGSHTATLLLAVALLGLPWPQEAGAFPAMPLSSLFANAVLRAQHLHQLAADTYKEFERAYIPEGQRYSIQNAQAAFCFSETIPAPTGKDEAQQRSDMELLRFSLLLIQSWLGPVQLLSRVFTNSLVLGTSDRVYEKLKDLEEGIQALMRELEDGSPRVGQILKQTYDKFDTNLRSDDALLKNYGLLSCFKKDLHKAETYLRVMKCRRFVESSCAF</sequence>
<evidence type="ECO:0000250" key="1"/>
<evidence type="ECO:0000250" key="2">
    <source>
        <dbReference type="UniProtKB" id="P01241"/>
    </source>
</evidence>
<evidence type="ECO:0000305" key="3"/>
<accession>Q9GMB2</accession>
<keyword id="KW-1015">Disulfide bond</keyword>
<keyword id="KW-0372">Hormone</keyword>
<keyword id="KW-0479">Metal-binding</keyword>
<keyword id="KW-0597">Phosphoprotein</keyword>
<keyword id="KW-0964">Secreted</keyword>
<keyword id="KW-0732">Signal</keyword>
<keyword id="KW-0862">Zinc</keyword>
<gene>
    <name type="primary">GH1</name>
</gene>
<proteinExistence type="inferred from homology"/>
<organism>
    <name type="scientific">Xanthonycticebus pygmaeus</name>
    <name type="common">Pygmy slow loris</name>
    <name type="synonym">Nycticebus pygmaeus</name>
    <dbReference type="NCBI Taxonomy" id="101278"/>
    <lineage>
        <taxon>Eukaryota</taxon>
        <taxon>Metazoa</taxon>
        <taxon>Chordata</taxon>
        <taxon>Craniata</taxon>
        <taxon>Vertebrata</taxon>
        <taxon>Euteleostomi</taxon>
        <taxon>Mammalia</taxon>
        <taxon>Eutheria</taxon>
        <taxon>Euarchontoglires</taxon>
        <taxon>Primates</taxon>
        <taxon>Strepsirrhini</taxon>
        <taxon>Lorisiformes</taxon>
        <taxon>Lorisidae</taxon>
        <taxon>Xanthonycticebus</taxon>
    </lineage>
</organism>
<dbReference type="EMBL" id="AJ297562">
    <property type="protein sequence ID" value="CAC03504.1"/>
    <property type="molecule type" value="Genomic_DNA"/>
</dbReference>
<dbReference type="SMR" id="Q9GMB2"/>
<dbReference type="GO" id="GO:0005615">
    <property type="term" value="C:extracellular space"/>
    <property type="evidence" value="ECO:0007669"/>
    <property type="project" value="InterPro"/>
</dbReference>
<dbReference type="GO" id="GO:0008083">
    <property type="term" value="F:growth factor activity"/>
    <property type="evidence" value="ECO:0007669"/>
    <property type="project" value="TreeGrafter"/>
</dbReference>
<dbReference type="GO" id="GO:0005131">
    <property type="term" value="F:growth hormone receptor binding"/>
    <property type="evidence" value="ECO:0007669"/>
    <property type="project" value="InterPro"/>
</dbReference>
<dbReference type="GO" id="GO:0005179">
    <property type="term" value="F:hormone activity"/>
    <property type="evidence" value="ECO:0007669"/>
    <property type="project" value="UniProtKB-KW"/>
</dbReference>
<dbReference type="GO" id="GO:0046872">
    <property type="term" value="F:metal ion binding"/>
    <property type="evidence" value="ECO:0007669"/>
    <property type="project" value="UniProtKB-KW"/>
</dbReference>
<dbReference type="GO" id="GO:0048513">
    <property type="term" value="P:animal organ development"/>
    <property type="evidence" value="ECO:0007669"/>
    <property type="project" value="TreeGrafter"/>
</dbReference>
<dbReference type="GO" id="GO:0060396">
    <property type="term" value="P:growth hormone receptor signaling pathway"/>
    <property type="evidence" value="ECO:0007669"/>
    <property type="project" value="TreeGrafter"/>
</dbReference>
<dbReference type="GO" id="GO:0045927">
    <property type="term" value="P:positive regulation of growth"/>
    <property type="evidence" value="ECO:0007669"/>
    <property type="project" value="TreeGrafter"/>
</dbReference>
<dbReference type="GO" id="GO:0046427">
    <property type="term" value="P:positive regulation of receptor signaling pathway via JAK-STAT"/>
    <property type="evidence" value="ECO:0007669"/>
    <property type="project" value="TreeGrafter"/>
</dbReference>
<dbReference type="GO" id="GO:0031667">
    <property type="term" value="P:response to nutrient levels"/>
    <property type="evidence" value="ECO:0007669"/>
    <property type="project" value="TreeGrafter"/>
</dbReference>
<dbReference type="CDD" id="cd10285">
    <property type="entry name" value="somatotropin_like"/>
    <property type="match status" value="1"/>
</dbReference>
<dbReference type="FunFam" id="1.20.1250.10:FF:000002">
    <property type="entry name" value="Growth hormone"/>
    <property type="match status" value="1"/>
</dbReference>
<dbReference type="Gene3D" id="1.20.1250.10">
    <property type="match status" value="1"/>
</dbReference>
<dbReference type="InterPro" id="IPR009079">
    <property type="entry name" value="4_helix_cytokine-like_core"/>
</dbReference>
<dbReference type="InterPro" id="IPR034975">
    <property type="entry name" value="Somatotropin"/>
</dbReference>
<dbReference type="InterPro" id="IPR001400">
    <property type="entry name" value="Somatotropin/Prolactin"/>
</dbReference>
<dbReference type="InterPro" id="IPR018116">
    <property type="entry name" value="Somatotropin_CS"/>
</dbReference>
<dbReference type="PANTHER" id="PTHR11417:SF2">
    <property type="entry name" value="SOMATOTROPIN"/>
    <property type="match status" value="1"/>
</dbReference>
<dbReference type="PANTHER" id="PTHR11417">
    <property type="entry name" value="SOMATOTROPIN,PROLACTIN"/>
    <property type="match status" value="1"/>
</dbReference>
<dbReference type="Pfam" id="PF00103">
    <property type="entry name" value="Hormone_1"/>
    <property type="match status" value="1"/>
</dbReference>
<dbReference type="PRINTS" id="PR00836">
    <property type="entry name" value="SOMATOTROPIN"/>
</dbReference>
<dbReference type="SUPFAM" id="SSF47266">
    <property type="entry name" value="4-helical cytokines"/>
    <property type="match status" value="1"/>
</dbReference>
<dbReference type="PROSITE" id="PS00266">
    <property type="entry name" value="SOMATOTROPIN_1"/>
    <property type="match status" value="1"/>
</dbReference>
<dbReference type="PROSITE" id="PS00338">
    <property type="entry name" value="SOMATOTROPIN_2"/>
    <property type="match status" value="1"/>
</dbReference>
<reference key="1">
    <citation type="submission" date="2000-08" db="EMBL/GenBank/DDBJ databases">
        <title>Cloning and characterisation of the gene encoding slow loris growth hormone.</title>
        <authorList>
            <person name="Wallis O.C."/>
            <person name="Zhang Y.P."/>
            <person name="Wallis M."/>
        </authorList>
    </citation>
    <scope>NUCLEOTIDE SEQUENCE [GENOMIC DNA]</scope>
    <source>
        <tissue>Liver</tissue>
    </source>
</reference>
<name>SOMA_XANPY</name>
<protein>
    <recommendedName>
        <fullName>Somatotropin</fullName>
    </recommendedName>
    <alternativeName>
        <fullName>Growth hormone</fullName>
    </alternativeName>
</protein>